<dbReference type="EC" id="6.5.1.8" evidence="1"/>
<dbReference type="EMBL" id="DS549501">
    <property type="protein sequence ID" value="EDR25533.1"/>
    <property type="molecule type" value="Genomic_DNA"/>
</dbReference>
<dbReference type="RefSeq" id="XP_001738172.1">
    <property type="nucleotide sequence ID" value="XM_001738120.1"/>
</dbReference>
<dbReference type="SMR" id="B0EIW5"/>
<dbReference type="EnsemblProtists" id="EDR25533">
    <property type="protein sequence ID" value="EDR25533"/>
    <property type="gene ID" value="EDI_260790"/>
</dbReference>
<dbReference type="GeneID" id="5883243"/>
<dbReference type="KEGG" id="edi:EDI_260790"/>
<dbReference type="VEuPathDB" id="AmoebaDB:EDI_260790"/>
<dbReference type="eggNOG" id="KOG3833">
    <property type="taxonomic scope" value="Eukaryota"/>
</dbReference>
<dbReference type="OMA" id="WSCSHGA"/>
<dbReference type="OrthoDB" id="10249697at2759"/>
<dbReference type="Proteomes" id="UP000008076">
    <property type="component" value="Unassembled WGS sequence"/>
</dbReference>
<dbReference type="GO" id="GO:0005634">
    <property type="term" value="C:nucleus"/>
    <property type="evidence" value="ECO:0007669"/>
    <property type="project" value="TreeGrafter"/>
</dbReference>
<dbReference type="GO" id="GO:0072669">
    <property type="term" value="C:tRNA-splicing ligase complex"/>
    <property type="evidence" value="ECO:0007669"/>
    <property type="project" value="UniProtKB-UniRule"/>
</dbReference>
<dbReference type="GO" id="GO:0005525">
    <property type="term" value="F:GTP binding"/>
    <property type="evidence" value="ECO:0007669"/>
    <property type="project" value="UniProtKB-KW"/>
</dbReference>
<dbReference type="GO" id="GO:0046872">
    <property type="term" value="F:metal ion binding"/>
    <property type="evidence" value="ECO:0007669"/>
    <property type="project" value="UniProtKB-KW"/>
</dbReference>
<dbReference type="GO" id="GO:0003972">
    <property type="term" value="F:RNA ligase (ATP) activity"/>
    <property type="evidence" value="ECO:0007669"/>
    <property type="project" value="TreeGrafter"/>
</dbReference>
<dbReference type="GO" id="GO:0170057">
    <property type="term" value="F:RNA ligase (GTP) activity"/>
    <property type="evidence" value="ECO:0007669"/>
    <property type="project" value="UniProtKB-EC"/>
</dbReference>
<dbReference type="GO" id="GO:0006388">
    <property type="term" value="P:tRNA splicing, via endonucleolytic cleavage and ligation"/>
    <property type="evidence" value="ECO:0007669"/>
    <property type="project" value="UniProtKB-UniRule"/>
</dbReference>
<dbReference type="FunFam" id="3.90.1860.10:FF:000001">
    <property type="entry name" value="tRNA-splicing ligase RtcB homolog"/>
    <property type="match status" value="1"/>
</dbReference>
<dbReference type="Gene3D" id="3.90.1860.10">
    <property type="entry name" value="tRNA-splicing ligase RtcB"/>
    <property type="match status" value="1"/>
</dbReference>
<dbReference type="HAMAP" id="MF_03144">
    <property type="entry name" value="RtcB_euk"/>
    <property type="match status" value="1"/>
</dbReference>
<dbReference type="InterPro" id="IPR001233">
    <property type="entry name" value="RtcB"/>
</dbReference>
<dbReference type="InterPro" id="IPR036025">
    <property type="entry name" value="RtcB-like_sf"/>
</dbReference>
<dbReference type="InterPro" id="IPR027513">
    <property type="entry name" value="RtcB_euk"/>
</dbReference>
<dbReference type="PANTHER" id="PTHR11118">
    <property type="entry name" value="RNA-SPLICING LIGASE RTCB HOMOLOG"/>
    <property type="match status" value="1"/>
</dbReference>
<dbReference type="PANTHER" id="PTHR11118:SF1">
    <property type="entry name" value="RNA-SPLICING LIGASE RTCB HOMOLOG"/>
    <property type="match status" value="1"/>
</dbReference>
<dbReference type="Pfam" id="PF01139">
    <property type="entry name" value="RtcB"/>
    <property type="match status" value="1"/>
</dbReference>
<dbReference type="SUPFAM" id="SSF103365">
    <property type="entry name" value="Hypothetical protein PH1602"/>
    <property type="match status" value="1"/>
</dbReference>
<reference key="1">
    <citation type="submission" date="2007-12" db="EMBL/GenBank/DDBJ databases">
        <title>Annotation of Entamoeba dispar SAW760.</title>
        <authorList>
            <person name="Lorenzi H."/>
            <person name="Inman J."/>
            <person name="Schobel S."/>
            <person name="Amedeo P."/>
            <person name="Caler E."/>
        </authorList>
    </citation>
    <scope>NUCLEOTIDE SEQUENCE [LARGE SCALE GENOMIC DNA]</scope>
    <source>
        <strain>ATCC PRA-260 / SAW760</strain>
    </source>
</reference>
<keyword id="KW-0342">GTP-binding</keyword>
<keyword id="KW-0436">Ligase</keyword>
<keyword id="KW-0464">Manganese</keyword>
<keyword id="KW-0479">Metal-binding</keyword>
<keyword id="KW-0547">Nucleotide-binding</keyword>
<keyword id="KW-0819">tRNA processing</keyword>
<protein>
    <recommendedName>
        <fullName evidence="1">RNA-splicing ligase RtcB homolog 2</fullName>
        <ecNumber evidence="1">6.5.1.8</ecNumber>
    </recommendedName>
    <alternativeName>
        <fullName evidence="1">3'-phosphate/5'-hydroxy nucleic acid ligase 2</fullName>
    </alternativeName>
</protein>
<comment type="function">
    <text evidence="1">Catalytic subunit of the tRNA-splicing ligase complex that acts by directly joining spliced tRNA halves to mature-sized tRNAs by incorporating the precursor-derived splice junction phosphate into the mature tRNA as a canonical 3',5'-phosphodiester. May act as an RNA ligase with broad substrate specificity, and may function toward other RNAs.</text>
</comment>
<comment type="catalytic activity">
    <reaction evidence="1">
        <text>a 3'-end 3'-phospho-ribonucleotide-RNA + a 5'-end dephospho-ribonucleoside-RNA + GTP = a ribonucleotidyl-ribonucleotide-RNA + GMP + diphosphate</text>
        <dbReference type="Rhea" id="RHEA:68076"/>
        <dbReference type="Rhea" id="RHEA-COMP:10463"/>
        <dbReference type="Rhea" id="RHEA-COMP:13936"/>
        <dbReference type="Rhea" id="RHEA-COMP:17355"/>
        <dbReference type="ChEBI" id="CHEBI:33019"/>
        <dbReference type="ChEBI" id="CHEBI:37565"/>
        <dbReference type="ChEBI" id="CHEBI:58115"/>
        <dbReference type="ChEBI" id="CHEBI:83062"/>
        <dbReference type="ChEBI" id="CHEBI:138284"/>
        <dbReference type="ChEBI" id="CHEBI:173118"/>
        <dbReference type="EC" id="6.5.1.8"/>
    </reaction>
</comment>
<comment type="catalytic activity">
    <reaction evidence="1">
        <text>a 3'-end 2',3'-cyclophospho-ribonucleotide-RNA + a 5'-end dephospho-ribonucleoside-RNA + GTP + H2O = a ribonucleotidyl-ribonucleotide-RNA + GMP + diphosphate + H(+)</text>
        <dbReference type="Rhea" id="RHEA:68080"/>
        <dbReference type="Rhea" id="RHEA-COMP:10464"/>
        <dbReference type="Rhea" id="RHEA-COMP:13936"/>
        <dbReference type="Rhea" id="RHEA-COMP:17355"/>
        <dbReference type="ChEBI" id="CHEBI:15377"/>
        <dbReference type="ChEBI" id="CHEBI:15378"/>
        <dbReference type="ChEBI" id="CHEBI:33019"/>
        <dbReference type="ChEBI" id="CHEBI:37565"/>
        <dbReference type="ChEBI" id="CHEBI:58115"/>
        <dbReference type="ChEBI" id="CHEBI:83064"/>
        <dbReference type="ChEBI" id="CHEBI:138284"/>
        <dbReference type="ChEBI" id="CHEBI:173118"/>
        <dbReference type="EC" id="6.5.1.8"/>
    </reaction>
</comment>
<comment type="cofactor">
    <cofactor evidence="1">
        <name>Mn(2+)</name>
        <dbReference type="ChEBI" id="CHEBI:29035"/>
    </cofactor>
    <text evidence="1">Binds 2 manganese ions per subunit.</text>
</comment>
<comment type="subunit">
    <text evidence="1">Catalytic component of the tRNA-splicing ligase complex.</text>
</comment>
<comment type="miscellaneous">
    <text evidence="1">Ligation probably proceeds through 3 nucleotidyl transfer steps, with 2',3'-cyclic phosphate termini being hydrolyzed to 3'-P termini in a step that precedes 3'-P activation with GMP. In the first nucleotidyl transfer step, RTCB reacts with GTP to form a covalent RTCB-histidine-GMP intermediate with release of PPi; in the second step, the GMP moiety is transferred to the RNA 3'-P; in the third step, the 5'-OH from the opposite RNA strand attacks the activated 3'-P to form a 3',5'-phosphodiester bond and release GMP.</text>
</comment>
<comment type="similarity">
    <text evidence="1">Belongs to the RtcB family.</text>
</comment>
<organism>
    <name type="scientific">Entamoeba dispar (strain ATCC PRA-260 / SAW760)</name>
    <dbReference type="NCBI Taxonomy" id="370354"/>
    <lineage>
        <taxon>Eukaryota</taxon>
        <taxon>Amoebozoa</taxon>
        <taxon>Evosea</taxon>
        <taxon>Archamoebae</taxon>
        <taxon>Mastigamoebida</taxon>
        <taxon>Entamoebidae</taxon>
        <taxon>Entamoeba</taxon>
    </lineage>
</organism>
<name>RTCB2_ENTDS</name>
<proteinExistence type="inferred from homology"/>
<accession>B0EIW5</accession>
<feature type="chain" id="PRO_0000407230" description="RNA-splicing ligase RtcB homolog 2">
    <location>
        <begin position="1"/>
        <end position="524"/>
    </location>
</feature>
<feature type="active site" description="GMP-histidine intermediate" evidence="1">
    <location>
        <position position="447"/>
    </location>
</feature>
<feature type="binding site" evidence="1">
    <location>
        <position position="141"/>
    </location>
    <ligand>
        <name>Mn(2+)</name>
        <dbReference type="ChEBI" id="CHEBI:29035"/>
        <label>1</label>
    </ligand>
</feature>
<feature type="binding site" evidence="1">
    <location>
        <position position="144"/>
    </location>
    <ligand>
        <name>Mn(2+)</name>
        <dbReference type="ChEBI" id="CHEBI:29035"/>
        <label>1</label>
    </ligand>
</feature>
<feature type="binding site" evidence="1">
    <location>
        <position position="144"/>
    </location>
    <ligand>
        <name>Mn(2+)</name>
        <dbReference type="ChEBI" id="CHEBI:29035"/>
        <label>2</label>
    </ligand>
</feature>
<feature type="binding site" evidence="1">
    <location>
        <begin position="248"/>
        <end position="252"/>
    </location>
    <ligand>
        <name>GMP</name>
        <dbReference type="ChEBI" id="CHEBI:58115"/>
    </ligand>
</feature>
<feature type="binding site" evidence="1">
    <location>
        <position position="249"/>
    </location>
    <ligand>
        <name>Mn(2+)</name>
        <dbReference type="ChEBI" id="CHEBI:29035"/>
        <label>1</label>
    </ligand>
</feature>
<feature type="binding site" evidence="1">
    <location>
        <position position="281"/>
    </location>
    <ligand>
        <name>Mn(2+)</name>
        <dbReference type="ChEBI" id="CHEBI:29035"/>
        <label>2</label>
    </ligand>
</feature>
<feature type="binding site" evidence="1">
    <location>
        <begin position="372"/>
        <end position="373"/>
    </location>
    <ligand>
        <name>GMP</name>
        <dbReference type="ChEBI" id="CHEBI:58115"/>
    </ligand>
</feature>
<feature type="binding site" evidence="1">
    <location>
        <position position="372"/>
    </location>
    <ligand>
        <name>Mn(2+)</name>
        <dbReference type="ChEBI" id="CHEBI:29035"/>
        <label>2</label>
    </ligand>
</feature>
<feature type="binding site" evidence="1">
    <location>
        <begin position="421"/>
        <end position="424"/>
    </location>
    <ligand>
        <name>GMP</name>
        <dbReference type="ChEBI" id="CHEBI:58115"/>
    </ligand>
</feature>
<feature type="binding site" evidence="1">
    <location>
        <position position="428"/>
    </location>
    <ligand>
        <name>GMP</name>
        <dbReference type="ChEBI" id="CHEBI:58115"/>
    </ligand>
</feature>
<feature type="binding site" evidence="1">
    <location>
        <begin position="447"/>
        <end position="450"/>
    </location>
    <ligand>
        <name>GMP</name>
        <dbReference type="ChEBI" id="CHEBI:58115"/>
    </ligand>
</feature>
<feature type="binding site" evidence="1">
    <location>
        <position position="523"/>
    </location>
    <ligand>
        <name>GMP</name>
        <dbReference type="ChEBI" id="CHEBI:58115"/>
    </ligand>
</feature>
<evidence type="ECO:0000255" key="1">
    <source>
        <dbReference type="HAMAP-Rule" id="MF_03144"/>
    </source>
</evidence>
<sequence>MSSGYKPGKKRKVQPVQPIKKELVDFYGCQIPKEYEPYLQRTNVSLIIKKGFINGMKNDAEMFCNDDLFELLMNELLNEQPGASFSSCVRQTANVATLPGVIKSLAMPDAHSGYGFSIGGVAAMRLDDPNAVICPGGVGFDINCGVRLLRTNLDDKDIEPHLVELADALQKNIPSGVGTTSNQTLTEKEMNEIMNEGLEWLVKKDLAWKEDLVYCEENGRIINSDPHLVSQKARGRGRNQLGTLGSGNHYLEIQRVDEIMDMEAAKQMGISHIGQICIMIHCGSRGLGHQVCQDFVDLCVNQSNKNEVDIQLTGVPFQSDNGQKYFKAMNAAANYAFANRGMISYHVRCTFEQVFKKSPKDLDMHLVYDVCHNIAKEEIHLIDGNEIKCIVHRKGATRAFAPLNPVIPDAYKPIGQPAIIGGSMGTCSYMLVGTQEGMKKTFGSTCHGAGRKISRVKAMKDISSNSVVEEMKKKGIELRITDPKLAAEEADGAYKDVKEVVETCQSAGISKIVFKLKPLIVVKG</sequence>
<gene>
    <name type="ORF">EDI_260790</name>
</gene>